<dbReference type="EMBL" id="V01442">
    <property type="protein sequence ID" value="CAA24703.1"/>
    <property type="molecule type" value="mRNA"/>
</dbReference>
<dbReference type="EMBL" id="X71081">
    <property type="protein sequence ID" value="CAA50399.1"/>
    <property type="molecule type" value="Genomic_DNA"/>
</dbReference>
<dbReference type="EMBL" id="BC041282">
    <property type="protein sequence ID" value="AAH41282.1"/>
    <property type="molecule type" value="mRNA"/>
</dbReference>
<dbReference type="EMBL" id="BC041307">
    <property type="protein sequence ID" value="AAH41307.1"/>
    <property type="molecule type" value="mRNA"/>
</dbReference>
<dbReference type="EMBL" id="M21485">
    <property type="protein sequence ID" value="AAA49954.1"/>
    <property type="molecule type" value="mRNA"/>
</dbReference>
<dbReference type="EMBL" id="M21486">
    <property type="protein sequence ID" value="AAA49955.1"/>
    <property type="molecule type" value="mRNA"/>
</dbReference>
<dbReference type="PIR" id="JT0310">
    <property type="entry name" value="R3XL8"/>
</dbReference>
<dbReference type="RefSeq" id="NP_001081322.1">
    <property type="nucleotide sequence ID" value="NM_001087853.1"/>
</dbReference>
<dbReference type="RefSeq" id="NP_001084502.1">
    <property type="nucleotide sequence ID" value="NM_001091033.1"/>
</dbReference>
<dbReference type="RefSeq" id="XP_018117195.1">
    <property type="nucleotide sequence ID" value="XM_018261706.1"/>
</dbReference>
<dbReference type="RefSeq" id="XP_018119805.1">
    <property type="nucleotide sequence ID" value="XM_018264316.1"/>
</dbReference>
<dbReference type="PDB" id="7OYC">
    <property type="method" value="EM"/>
    <property type="resolution" value="2.40 A"/>
    <property type="chains" value="H2=1-194"/>
</dbReference>
<dbReference type="PDBsum" id="7OYC"/>
<dbReference type="EMDB" id="EMD-13113"/>
<dbReference type="SMR" id="P02362"/>
<dbReference type="BioGRID" id="100868">
    <property type="interactions" value="1"/>
</dbReference>
<dbReference type="BioGRID" id="99113">
    <property type="interactions" value="2"/>
</dbReference>
<dbReference type="IntAct" id="P02362">
    <property type="interactions" value="1"/>
</dbReference>
<dbReference type="DNASU" id="397774"/>
<dbReference type="DNASU" id="414368"/>
<dbReference type="GeneID" id="397774"/>
<dbReference type="GeneID" id="414368"/>
<dbReference type="KEGG" id="xla:397774"/>
<dbReference type="KEGG" id="xla:414368"/>
<dbReference type="AGR" id="Xenbase:XB-GENE-17336389"/>
<dbReference type="CTD" id="397774"/>
<dbReference type="CTD" id="414368"/>
<dbReference type="Xenbase" id="XB-GENE-17336389">
    <property type="gene designation" value="rps7.L"/>
</dbReference>
<dbReference type="OrthoDB" id="1724687at2759"/>
<dbReference type="CD-CODE" id="78E86D56">
    <property type="entry name" value="Mitochondrial cloud"/>
</dbReference>
<dbReference type="Proteomes" id="UP000186698">
    <property type="component" value="Chromosome 5L"/>
</dbReference>
<dbReference type="Proteomes" id="UP000186698">
    <property type="component" value="Chromosome 5S"/>
</dbReference>
<dbReference type="Bgee" id="397774">
    <property type="expression patterns" value="Expressed in spleen and 19 other cell types or tissues"/>
</dbReference>
<dbReference type="GO" id="GO:0030686">
    <property type="term" value="C:90S preribosome"/>
    <property type="evidence" value="ECO:0007669"/>
    <property type="project" value="TreeGrafter"/>
</dbReference>
<dbReference type="GO" id="GO:0005813">
    <property type="term" value="C:centrosome"/>
    <property type="evidence" value="ECO:0007669"/>
    <property type="project" value="UniProtKB-SubCell"/>
</dbReference>
<dbReference type="GO" id="GO:0022627">
    <property type="term" value="C:cytosolic small ribosomal subunit"/>
    <property type="evidence" value="ECO:0000318"/>
    <property type="project" value="GO_Central"/>
</dbReference>
<dbReference type="GO" id="GO:0005634">
    <property type="term" value="C:nucleus"/>
    <property type="evidence" value="ECO:0007669"/>
    <property type="project" value="UniProtKB-SubCell"/>
</dbReference>
<dbReference type="GO" id="GO:0032040">
    <property type="term" value="C:small-subunit processome"/>
    <property type="evidence" value="ECO:0000318"/>
    <property type="project" value="GO_Central"/>
</dbReference>
<dbReference type="GO" id="GO:0003735">
    <property type="term" value="F:structural constituent of ribosome"/>
    <property type="evidence" value="ECO:0007669"/>
    <property type="project" value="InterPro"/>
</dbReference>
<dbReference type="GO" id="GO:0042274">
    <property type="term" value="P:ribosomal small subunit biogenesis"/>
    <property type="evidence" value="ECO:0000318"/>
    <property type="project" value="GO_Central"/>
</dbReference>
<dbReference type="GO" id="GO:0006364">
    <property type="term" value="P:rRNA processing"/>
    <property type="evidence" value="ECO:0000318"/>
    <property type="project" value="GO_Central"/>
</dbReference>
<dbReference type="GO" id="GO:0006412">
    <property type="term" value="P:translation"/>
    <property type="evidence" value="ECO:0007669"/>
    <property type="project" value="InterPro"/>
</dbReference>
<dbReference type="InterPro" id="IPR000554">
    <property type="entry name" value="Ribosomal_eS7"/>
</dbReference>
<dbReference type="InterPro" id="IPR047861">
    <property type="entry name" value="Ribosomal_eS7_CS"/>
</dbReference>
<dbReference type="PANTHER" id="PTHR11278">
    <property type="entry name" value="40S RIBOSOMAL PROTEIN S7"/>
    <property type="match status" value="1"/>
</dbReference>
<dbReference type="PANTHER" id="PTHR11278:SF0">
    <property type="entry name" value="SMALL RIBOSOMAL SUBUNIT PROTEIN ES7"/>
    <property type="match status" value="1"/>
</dbReference>
<dbReference type="Pfam" id="PF01251">
    <property type="entry name" value="Ribosomal_S7e"/>
    <property type="match status" value="1"/>
</dbReference>
<dbReference type="PROSITE" id="PS00948">
    <property type="entry name" value="RIBOSOMAL_S7E"/>
    <property type="match status" value="1"/>
</dbReference>
<keyword id="KW-0002">3D-structure</keyword>
<keyword id="KW-0963">Cytoplasm</keyword>
<keyword id="KW-0206">Cytoskeleton</keyword>
<keyword id="KW-0539">Nucleus</keyword>
<keyword id="KW-1185">Reference proteome</keyword>
<keyword id="KW-0687">Ribonucleoprotein</keyword>
<keyword id="KW-0689">Ribosomal protein</keyword>
<evidence type="ECO:0000250" key="1">
    <source>
        <dbReference type="UniProtKB" id="P62081"/>
    </source>
</evidence>
<evidence type="ECO:0000305" key="2"/>
<gene>
    <name type="primary">rps7</name>
    <name type="synonym">rps8</name>
</gene>
<feature type="chain" id="PRO_0000174197" description="Small ribosomal subunit protein eS7">
    <location>
        <begin position="1"/>
        <end position="194"/>
    </location>
</feature>
<protein>
    <recommendedName>
        <fullName evidence="2">Small ribosomal subunit protein eS7</fullName>
    </recommendedName>
    <alternativeName>
        <fullName>40S ribosomal protein S7</fullName>
    </alternativeName>
    <alternativeName>
        <fullName>40S ribosomal protein S8</fullName>
    </alternativeName>
</protein>
<accession>P02362</accession>
<accession>Q6GTS0</accession>
<reference key="1">
    <citation type="journal article" date="1988" name="Gene">
        <title>Isolation and nucleotide sequences of cDNAs for Xenopus laevis ribosomal protein S8: similarities in the 5' and 3' untranslated regions of mRNAs for various r-proteins.</title>
        <authorList>
            <person name="Mariottini P."/>
            <person name="Bagni C."/>
            <person name="Annesi F."/>
            <person name="Amaldi F."/>
        </authorList>
    </citation>
    <scope>NUCLEOTIDE SEQUENCE [MRNA]</scope>
</reference>
<reference key="2">
    <citation type="journal article" date="1993" name="Gene">
        <title>Sequence of the gene coding for ribosomal protein S8 of Xenopus laevis.</title>
        <authorList>
            <person name="Mariottini P."/>
            <person name="Bagni C."/>
            <person name="Francesconi A."/>
            <person name="Cecconi F."/>
            <person name="Serra M.J."/>
            <person name="Chen Q.M."/>
            <person name="Loreni F."/>
            <person name="Annesi F."/>
            <person name="Amaldi F."/>
        </authorList>
    </citation>
    <scope>NUCLEOTIDE SEQUENCE [GENOMIC DNA]</scope>
</reference>
<reference key="3">
    <citation type="submission" date="2002-12" db="EMBL/GenBank/DDBJ databases">
        <authorList>
            <consortium name="NIH - Xenopus Gene Collection (XGC) project"/>
        </authorList>
    </citation>
    <scope>NUCLEOTIDE SEQUENCE [LARGE SCALE MRNA]</scope>
    <source>
        <tissue>Embryo</tissue>
    </source>
</reference>
<reference key="4">
    <citation type="journal article" date="1982" name="Gene">
        <title>Nucleotide sequences of cloned cDNA fragments specific for six Xenopus laevis ribosomal proteins.</title>
        <authorList>
            <person name="Amaldi F."/>
            <person name="Beccari E."/>
            <person name="Bozzoni I."/>
            <person name="Luo Z.-X."/>
            <person name="Pierandrei-Amaldi P."/>
        </authorList>
    </citation>
    <scope>NUCLEOTIDE SEQUENCE [MRNA] OF 19-188</scope>
</reference>
<organism>
    <name type="scientific">Xenopus laevis</name>
    <name type="common">African clawed frog</name>
    <dbReference type="NCBI Taxonomy" id="8355"/>
    <lineage>
        <taxon>Eukaryota</taxon>
        <taxon>Metazoa</taxon>
        <taxon>Chordata</taxon>
        <taxon>Craniata</taxon>
        <taxon>Vertebrata</taxon>
        <taxon>Euteleostomi</taxon>
        <taxon>Amphibia</taxon>
        <taxon>Batrachia</taxon>
        <taxon>Anura</taxon>
        <taxon>Pipoidea</taxon>
        <taxon>Pipidae</taxon>
        <taxon>Xenopodinae</taxon>
        <taxon>Xenopus</taxon>
        <taxon>Xenopus</taxon>
    </lineage>
</organism>
<proteinExistence type="evidence at protein level"/>
<comment type="function">
    <text evidence="1">Component of the small ribosomal subunit. The ribosome is a large ribonucleoprotein complex responsible for the synthesis of proteins in the cell. Required for rRNA maturation.</text>
</comment>
<comment type="subunit">
    <text evidence="1">Component of the small ribosomal subunit.</text>
</comment>
<comment type="subcellular location">
    <subcellularLocation>
        <location evidence="1">Cytoplasm</location>
        <location evidence="1">Cytoskeleton</location>
        <location evidence="1">Microtubule organizing center</location>
        <location evidence="1">Centrosome</location>
    </subcellularLocation>
    <subcellularLocation>
        <location evidence="1">Cytoplasm</location>
    </subcellularLocation>
    <subcellularLocation>
        <location evidence="1">Nucleus</location>
    </subcellularLocation>
</comment>
<comment type="similarity">
    <text evidence="2">Belongs to the eukaryotic ribosomal protein eS7 family.</text>
</comment>
<name>RS7_XENLA</name>
<sequence>MFSTSAKIVKPNGEKPDEFESGISQALLELEMNSDLKAQLRELNITAAKEIEVGAGRKAIIIFVPVPQLKSFQKIQVRLVRELEKKFSGKHVVFIAQRRILPKPTRKSRTKNKQKRPRSRTLTAVHDAILEDLVYPSEIVGRRIRVKLDGSRLIKVHLDKAQQNNVEHKVETFSGVYKKLTGKDVVFEFPEFQL</sequence>